<keyword id="KW-0066">ATP synthesis</keyword>
<keyword id="KW-1003">Cell membrane</keyword>
<keyword id="KW-0139">CF(1)</keyword>
<keyword id="KW-0375">Hydrogen ion transport</keyword>
<keyword id="KW-0406">Ion transport</keyword>
<keyword id="KW-0472">Membrane</keyword>
<keyword id="KW-0813">Transport</keyword>
<protein>
    <recommendedName>
        <fullName evidence="1">ATP synthase gamma chain</fullName>
    </recommendedName>
    <alternativeName>
        <fullName evidence="1">ATP synthase F1 sector gamma subunit</fullName>
    </alternativeName>
    <alternativeName>
        <fullName evidence="1">F-ATPase gamma subunit</fullName>
    </alternativeName>
</protein>
<proteinExistence type="inferred from homology"/>
<reference key="1">
    <citation type="submission" date="2006-06" db="EMBL/GenBank/DDBJ databases">
        <title>Complete sequence of chromosome of Mycobacterium sp. MCS.</title>
        <authorList>
            <consortium name="US DOE Joint Genome Institute"/>
            <person name="Copeland A."/>
            <person name="Lucas S."/>
            <person name="Lapidus A."/>
            <person name="Barry K."/>
            <person name="Detter J.C."/>
            <person name="Glavina del Rio T."/>
            <person name="Hammon N."/>
            <person name="Israni S."/>
            <person name="Dalin E."/>
            <person name="Tice H."/>
            <person name="Pitluck S."/>
            <person name="Martinez M."/>
            <person name="Schmutz J."/>
            <person name="Larimer F."/>
            <person name="Land M."/>
            <person name="Hauser L."/>
            <person name="Kyrpides N."/>
            <person name="Kim E."/>
            <person name="Miller C.D."/>
            <person name="Hughes J.E."/>
            <person name="Anderson A.J."/>
            <person name="Sims R.C."/>
            <person name="Richardson P."/>
        </authorList>
    </citation>
    <scope>NUCLEOTIDE SEQUENCE [LARGE SCALE GENOMIC DNA]</scope>
    <source>
        <strain>MCS</strain>
    </source>
</reference>
<accession>Q1B552</accession>
<evidence type="ECO:0000255" key="1">
    <source>
        <dbReference type="HAMAP-Rule" id="MF_00815"/>
    </source>
</evidence>
<name>ATPG_MYCSS</name>
<gene>
    <name evidence="1" type="primary">atpG</name>
    <name type="ordered locus">Mmcs_3877</name>
</gene>
<feature type="chain" id="PRO_1000053260" description="ATP synthase gamma chain">
    <location>
        <begin position="1"/>
        <end position="309"/>
    </location>
</feature>
<dbReference type="EMBL" id="CP000384">
    <property type="protein sequence ID" value="ABG09982.1"/>
    <property type="molecule type" value="Genomic_DNA"/>
</dbReference>
<dbReference type="SMR" id="Q1B552"/>
<dbReference type="KEGG" id="mmc:Mmcs_3877"/>
<dbReference type="HOGENOM" id="CLU_050669_0_0_11"/>
<dbReference type="BioCyc" id="MSP164756:G1G6O-3961-MONOMER"/>
<dbReference type="GO" id="GO:0005886">
    <property type="term" value="C:plasma membrane"/>
    <property type="evidence" value="ECO:0007669"/>
    <property type="project" value="UniProtKB-SubCell"/>
</dbReference>
<dbReference type="GO" id="GO:0045259">
    <property type="term" value="C:proton-transporting ATP synthase complex"/>
    <property type="evidence" value="ECO:0007669"/>
    <property type="project" value="UniProtKB-KW"/>
</dbReference>
<dbReference type="GO" id="GO:0005524">
    <property type="term" value="F:ATP binding"/>
    <property type="evidence" value="ECO:0007669"/>
    <property type="project" value="UniProtKB-UniRule"/>
</dbReference>
<dbReference type="GO" id="GO:0046933">
    <property type="term" value="F:proton-transporting ATP synthase activity, rotational mechanism"/>
    <property type="evidence" value="ECO:0007669"/>
    <property type="project" value="UniProtKB-UniRule"/>
</dbReference>
<dbReference type="GO" id="GO:0042777">
    <property type="term" value="P:proton motive force-driven plasma membrane ATP synthesis"/>
    <property type="evidence" value="ECO:0007669"/>
    <property type="project" value="UniProtKB-UniRule"/>
</dbReference>
<dbReference type="CDD" id="cd12151">
    <property type="entry name" value="F1-ATPase_gamma"/>
    <property type="match status" value="1"/>
</dbReference>
<dbReference type="Gene3D" id="3.40.1380.10">
    <property type="match status" value="1"/>
</dbReference>
<dbReference type="Gene3D" id="1.10.287.80">
    <property type="entry name" value="ATP synthase, gamma subunit, helix hairpin domain"/>
    <property type="match status" value="1"/>
</dbReference>
<dbReference type="HAMAP" id="MF_00815">
    <property type="entry name" value="ATP_synth_gamma_bact"/>
    <property type="match status" value="1"/>
</dbReference>
<dbReference type="InterPro" id="IPR035968">
    <property type="entry name" value="ATP_synth_F1_ATPase_gsu"/>
</dbReference>
<dbReference type="InterPro" id="IPR000131">
    <property type="entry name" value="ATP_synth_F1_gsu"/>
</dbReference>
<dbReference type="InterPro" id="IPR023632">
    <property type="entry name" value="ATP_synth_F1_gsu_CS"/>
</dbReference>
<dbReference type="NCBIfam" id="TIGR01146">
    <property type="entry name" value="ATPsyn_F1gamma"/>
    <property type="match status" value="1"/>
</dbReference>
<dbReference type="NCBIfam" id="NF004145">
    <property type="entry name" value="PRK05621.1-2"/>
    <property type="match status" value="1"/>
</dbReference>
<dbReference type="PANTHER" id="PTHR11693">
    <property type="entry name" value="ATP SYNTHASE GAMMA CHAIN"/>
    <property type="match status" value="1"/>
</dbReference>
<dbReference type="PANTHER" id="PTHR11693:SF22">
    <property type="entry name" value="ATP SYNTHASE SUBUNIT GAMMA, MITOCHONDRIAL"/>
    <property type="match status" value="1"/>
</dbReference>
<dbReference type="Pfam" id="PF00231">
    <property type="entry name" value="ATP-synt"/>
    <property type="match status" value="1"/>
</dbReference>
<dbReference type="PRINTS" id="PR00126">
    <property type="entry name" value="ATPASEGAMMA"/>
</dbReference>
<dbReference type="SUPFAM" id="SSF52943">
    <property type="entry name" value="ATP synthase (F1-ATPase), gamma subunit"/>
    <property type="match status" value="1"/>
</dbReference>
<dbReference type="PROSITE" id="PS00153">
    <property type="entry name" value="ATPASE_GAMMA"/>
    <property type="match status" value="1"/>
</dbReference>
<sequence length="309" mass="34214">MAATLRELRGRIRSAGSIKKITKAQEMIATSRIAKAQARVEAARPYDREITNMLTELATASALDHPLLVQRENPRRAGVLVVSSDRGLAGAYNANVFRRSEELFSLLREEGKEPVLYVVGRKALSYYSFRNWDVTESWSGFSERPEYEHAQEIGETLVKAFMAGVDDEGDDAGADGILGLDELHIVFTEFRSMLSQSAIARRIAPMVVEYSEEDTNEPHTLFSFEPSAETLFDALLPRYVSTRIFAAMLEAAASESASRRRAMKSASDNADDLIKDLTLMANRERQSQITQEISEIVGGANALADAAKK</sequence>
<comment type="function">
    <text evidence="1">Produces ATP from ADP in the presence of a proton gradient across the membrane. The gamma chain is believed to be important in regulating ATPase activity and the flow of protons through the CF(0) complex.</text>
</comment>
<comment type="subunit">
    <text evidence="1">F-type ATPases have 2 components, CF(1) - the catalytic core - and CF(0) - the membrane proton channel. CF(1) has five subunits: alpha(3), beta(3), gamma(1), delta(1), epsilon(1). CF(0) has three main subunits: a, b and c.</text>
</comment>
<comment type="subcellular location">
    <subcellularLocation>
        <location evidence="1">Cell membrane</location>
        <topology evidence="1">Peripheral membrane protein</topology>
    </subcellularLocation>
</comment>
<comment type="similarity">
    <text evidence="1">Belongs to the ATPase gamma chain family.</text>
</comment>
<organism>
    <name type="scientific">Mycobacterium sp. (strain MCS)</name>
    <dbReference type="NCBI Taxonomy" id="164756"/>
    <lineage>
        <taxon>Bacteria</taxon>
        <taxon>Bacillati</taxon>
        <taxon>Actinomycetota</taxon>
        <taxon>Actinomycetes</taxon>
        <taxon>Mycobacteriales</taxon>
        <taxon>Mycobacteriaceae</taxon>
        <taxon>Mycobacterium</taxon>
    </lineage>
</organism>